<name>PURA_YEAS8</name>
<proteinExistence type="inferred from homology"/>
<sequence length="433" mass="48261">MVNVVLGSQWGDEGKGKLVDLLVGKYDIVARCAGGNNAGHTIVVNGVKYDFHMLPSGLVNPNCQNLLGNGVVIHVPSFFKELETLEAKGLKNARSRLFVSSRAHLVFDFHQVTDKLRELELSGRSKDGKNIGTTGKGIGPTYSTKASRSGLRVHHLVNDQPGAWEEFVARYKRLLETRRQRYGDFEYDFEAKPAEYKKLREQLKPFVVDSVVFMHNAIEAKKKILVEGANALMLDIDFGTYPYVTSSNTGIGGVLTGLGIPPRTIDEIYGVVKAYTTRVGEGPFPTEQLNENGEKLQTIGAEFGVTTGRKRRCGWLDLVVLKYSTLINGYTSLNITKLDVLDTFKEIPVGISYSIQGKKLDLFPEDLNILGKVEVEYKVLPGWDQDITKITKYEDLPENAKKYLKYIENFVGVPVEWVGTGPARESMLHKEIK</sequence>
<dbReference type="EC" id="6.3.4.4" evidence="2"/>
<dbReference type="EMBL" id="FN393086">
    <property type="protein sequence ID" value="CAY82386.1"/>
    <property type="molecule type" value="Genomic_DNA"/>
</dbReference>
<dbReference type="SMR" id="C8ZG13"/>
<dbReference type="HOGENOM" id="CLU_029848_3_2_1"/>
<dbReference type="OrthoDB" id="22669at4893"/>
<dbReference type="UniPathway" id="UPA00075">
    <property type="reaction ID" value="UER00335"/>
</dbReference>
<dbReference type="Proteomes" id="UP000000286">
    <property type="component" value="Chromosome XIV, Scaffold EC1118_1N9"/>
</dbReference>
<dbReference type="GO" id="GO:0005737">
    <property type="term" value="C:cytoplasm"/>
    <property type="evidence" value="ECO:0007669"/>
    <property type="project" value="UniProtKB-SubCell"/>
</dbReference>
<dbReference type="GO" id="GO:0004019">
    <property type="term" value="F:adenylosuccinate synthase activity"/>
    <property type="evidence" value="ECO:0007669"/>
    <property type="project" value="UniProtKB-UniRule"/>
</dbReference>
<dbReference type="GO" id="GO:0005525">
    <property type="term" value="F:GTP binding"/>
    <property type="evidence" value="ECO:0007669"/>
    <property type="project" value="UniProtKB-UniRule"/>
</dbReference>
<dbReference type="GO" id="GO:0000287">
    <property type="term" value="F:magnesium ion binding"/>
    <property type="evidence" value="ECO:0007669"/>
    <property type="project" value="UniProtKB-UniRule"/>
</dbReference>
<dbReference type="GO" id="GO:0044208">
    <property type="term" value="P:'de novo' AMP biosynthetic process"/>
    <property type="evidence" value="ECO:0007669"/>
    <property type="project" value="UniProtKB-UniRule"/>
</dbReference>
<dbReference type="GO" id="GO:0046040">
    <property type="term" value="P:IMP metabolic process"/>
    <property type="evidence" value="ECO:0007669"/>
    <property type="project" value="TreeGrafter"/>
</dbReference>
<dbReference type="CDD" id="cd03108">
    <property type="entry name" value="AdSS"/>
    <property type="match status" value="1"/>
</dbReference>
<dbReference type="FunFam" id="3.90.170.10:FF:000001">
    <property type="entry name" value="Adenylosuccinate synthetase"/>
    <property type="match status" value="1"/>
</dbReference>
<dbReference type="FunFam" id="1.10.300.10:FF:000002">
    <property type="entry name" value="Adenylosuccinate synthetase, chloroplastic"/>
    <property type="match status" value="1"/>
</dbReference>
<dbReference type="Gene3D" id="3.40.440.10">
    <property type="entry name" value="Adenylosuccinate Synthetase, subunit A, domain 1"/>
    <property type="match status" value="1"/>
</dbReference>
<dbReference type="Gene3D" id="1.10.300.10">
    <property type="entry name" value="Adenylosuccinate Synthetase, subunit A, domain 2"/>
    <property type="match status" value="1"/>
</dbReference>
<dbReference type="Gene3D" id="3.90.170.10">
    <property type="entry name" value="Adenylosuccinate Synthetase, subunit A, domain 3"/>
    <property type="match status" value="1"/>
</dbReference>
<dbReference type="HAMAP" id="MF_00011">
    <property type="entry name" value="Adenylosucc_synth"/>
    <property type="match status" value="1"/>
</dbReference>
<dbReference type="InterPro" id="IPR018220">
    <property type="entry name" value="Adenylosuccin_syn_GTP-bd"/>
</dbReference>
<dbReference type="InterPro" id="IPR033128">
    <property type="entry name" value="Adenylosuccin_syn_Lys_AS"/>
</dbReference>
<dbReference type="InterPro" id="IPR042109">
    <property type="entry name" value="Adenylosuccinate_synth_dom1"/>
</dbReference>
<dbReference type="InterPro" id="IPR042110">
    <property type="entry name" value="Adenylosuccinate_synth_dom2"/>
</dbReference>
<dbReference type="InterPro" id="IPR042111">
    <property type="entry name" value="Adenylosuccinate_synth_dom3"/>
</dbReference>
<dbReference type="InterPro" id="IPR001114">
    <property type="entry name" value="Adenylosuccinate_synthetase"/>
</dbReference>
<dbReference type="InterPro" id="IPR027417">
    <property type="entry name" value="P-loop_NTPase"/>
</dbReference>
<dbReference type="NCBIfam" id="NF002223">
    <property type="entry name" value="PRK01117.1"/>
    <property type="match status" value="1"/>
</dbReference>
<dbReference type="NCBIfam" id="TIGR00184">
    <property type="entry name" value="purA"/>
    <property type="match status" value="1"/>
</dbReference>
<dbReference type="PANTHER" id="PTHR11846">
    <property type="entry name" value="ADENYLOSUCCINATE SYNTHETASE"/>
    <property type="match status" value="1"/>
</dbReference>
<dbReference type="PANTHER" id="PTHR11846:SF0">
    <property type="entry name" value="ADENYLOSUCCINATE SYNTHETASE"/>
    <property type="match status" value="1"/>
</dbReference>
<dbReference type="Pfam" id="PF00709">
    <property type="entry name" value="Adenylsucc_synt"/>
    <property type="match status" value="1"/>
</dbReference>
<dbReference type="SMART" id="SM00788">
    <property type="entry name" value="Adenylsucc_synt"/>
    <property type="match status" value="1"/>
</dbReference>
<dbReference type="SUPFAM" id="SSF52540">
    <property type="entry name" value="P-loop containing nucleoside triphosphate hydrolases"/>
    <property type="match status" value="1"/>
</dbReference>
<dbReference type="PROSITE" id="PS01266">
    <property type="entry name" value="ADENYLOSUCCIN_SYN_1"/>
    <property type="match status" value="1"/>
</dbReference>
<dbReference type="PROSITE" id="PS00513">
    <property type="entry name" value="ADENYLOSUCCIN_SYN_2"/>
    <property type="match status" value="1"/>
</dbReference>
<evidence type="ECO:0000250" key="1"/>
<evidence type="ECO:0000255" key="2">
    <source>
        <dbReference type="HAMAP-Rule" id="MF_03125"/>
    </source>
</evidence>
<protein>
    <recommendedName>
        <fullName evidence="2">Adenylosuccinate synthetase</fullName>
        <shortName evidence="2">AMPSase</shortName>
        <shortName evidence="2">AdSS</shortName>
        <ecNumber evidence="2">6.3.4.4</ecNumber>
    </recommendedName>
    <alternativeName>
        <fullName evidence="2">IMP--aspartate ligase</fullName>
    </alternativeName>
</protein>
<gene>
    <name evidence="2" type="primary">ADE12</name>
    <name type="ORF">EC1118_1N9_1244g</name>
</gene>
<comment type="function">
    <text evidence="1">Plays an important role in the de novo pathway and in the salvage pathway of purine nucleotide biosynthesis. Catalyzes the first committed step in the biosynthesis of AMP from IMP (By similarity).</text>
</comment>
<comment type="catalytic activity">
    <reaction evidence="2">
        <text>IMP + L-aspartate + GTP = N(6)-(1,2-dicarboxyethyl)-AMP + GDP + phosphate + 2 H(+)</text>
        <dbReference type="Rhea" id="RHEA:15753"/>
        <dbReference type="ChEBI" id="CHEBI:15378"/>
        <dbReference type="ChEBI" id="CHEBI:29991"/>
        <dbReference type="ChEBI" id="CHEBI:37565"/>
        <dbReference type="ChEBI" id="CHEBI:43474"/>
        <dbReference type="ChEBI" id="CHEBI:57567"/>
        <dbReference type="ChEBI" id="CHEBI:58053"/>
        <dbReference type="ChEBI" id="CHEBI:58189"/>
        <dbReference type="EC" id="6.3.4.4"/>
    </reaction>
</comment>
<comment type="cofactor">
    <cofactor evidence="2">
        <name>Mg(2+)</name>
        <dbReference type="ChEBI" id="CHEBI:18420"/>
    </cofactor>
    <text evidence="2">Binds 1 Mg(2+) ion per subunit.</text>
</comment>
<comment type="pathway">
    <text evidence="2">Purine metabolism; AMP biosynthesis via de novo pathway; AMP from IMP: step 1/2.</text>
</comment>
<comment type="subunit">
    <text evidence="2">Homodimer.</text>
</comment>
<comment type="subcellular location">
    <subcellularLocation>
        <location evidence="2">Cytoplasm</location>
    </subcellularLocation>
</comment>
<comment type="similarity">
    <text evidence="2">Belongs to the adenylosuccinate synthetase family.</text>
</comment>
<organism>
    <name type="scientific">Saccharomyces cerevisiae (strain Lalvin EC1118 / Prise de mousse)</name>
    <name type="common">Baker's yeast</name>
    <dbReference type="NCBI Taxonomy" id="643680"/>
    <lineage>
        <taxon>Eukaryota</taxon>
        <taxon>Fungi</taxon>
        <taxon>Dikarya</taxon>
        <taxon>Ascomycota</taxon>
        <taxon>Saccharomycotina</taxon>
        <taxon>Saccharomycetes</taxon>
        <taxon>Saccharomycetales</taxon>
        <taxon>Saccharomycetaceae</taxon>
        <taxon>Saccharomyces</taxon>
    </lineage>
</organism>
<accession>C8ZG13</accession>
<reference key="1">
    <citation type="journal article" date="2009" name="Proc. Natl. Acad. Sci. U.S.A.">
        <title>Eukaryote-to-eukaryote gene transfer events revealed by the genome sequence of the wine yeast Saccharomyces cerevisiae EC1118.</title>
        <authorList>
            <person name="Novo M."/>
            <person name="Bigey F."/>
            <person name="Beyne E."/>
            <person name="Galeote V."/>
            <person name="Gavory F."/>
            <person name="Mallet S."/>
            <person name="Cambon B."/>
            <person name="Legras J.-L."/>
            <person name="Wincker P."/>
            <person name="Casaregola S."/>
            <person name="Dequin S."/>
        </authorList>
    </citation>
    <scope>NUCLEOTIDE SEQUENCE [LARGE SCALE GENOMIC DNA]</scope>
    <source>
        <strain>Lalvin EC1118 / Prise de mousse</strain>
    </source>
</reference>
<feature type="chain" id="PRO_0000399361" description="Adenylosuccinate synthetase">
    <location>
        <begin position="1"/>
        <end position="433"/>
    </location>
</feature>
<feature type="active site" description="Proton acceptor" evidence="2">
    <location>
        <position position="12"/>
    </location>
</feature>
<feature type="active site" description="Proton donor" evidence="2">
    <location>
        <position position="40"/>
    </location>
</feature>
<feature type="binding site" evidence="2">
    <location>
        <begin position="11"/>
        <end position="17"/>
    </location>
    <ligand>
        <name>GTP</name>
        <dbReference type="ChEBI" id="CHEBI:37565"/>
    </ligand>
</feature>
<feature type="binding site" description="in other chain" evidence="2">
    <location>
        <begin position="12"/>
        <end position="15"/>
    </location>
    <ligand>
        <name>IMP</name>
        <dbReference type="ChEBI" id="CHEBI:58053"/>
        <note>ligand shared between dimeric partners</note>
    </ligand>
</feature>
<feature type="binding site" evidence="2">
    <location>
        <position position="12"/>
    </location>
    <ligand>
        <name>Mg(2+)</name>
        <dbReference type="ChEBI" id="CHEBI:18420"/>
    </ligand>
</feature>
<feature type="binding site" description="in other chain" evidence="2">
    <location>
        <begin position="37"/>
        <end position="40"/>
    </location>
    <ligand>
        <name>IMP</name>
        <dbReference type="ChEBI" id="CHEBI:58053"/>
        <note>ligand shared between dimeric partners</note>
    </ligand>
</feature>
<feature type="binding site" evidence="2">
    <location>
        <begin position="39"/>
        <end position="41"/>
    </location>
    <ligand>
        <name>GTP</name>
        <dbReference type="ChEBI" id="CHEBI:37565"/>
    </ligand>
</feature>
<feature type="binding site" evidence="2">
    <location>
        <position position="39"/>
    </location>
    <ligand>
        <name>Mg(2+)</name>
        <dbReference type="ChEBI" id="CHEBI:18420"/>
    </ligand>
</feature>
<feature type="binding site" description="in other chain" evidence="2">
    <location>
        <position position="134"/>
    </location>
    <ligand>
        <name>IMP</name>
        <dbReference type="ChEBI" id="CHEBI:58053"/>
        <note>ligand shared between dimeric partners</note>
    </ligand>
</feature>
<feature type="binding site" evidence="2">
    <location>
        <position position="148"/>
    </location>
    <ligand>
        <name>IMP</name>
        <dbReference type="ChEBI" id="CHEBI:58053"/>
        <note>ligand shared between dimeric partners</note>
    </ligand>
</feature>
<feature type="binding site" description="in other chain" evidence="2">
    <location>
        <position position="230"/>
    </location>
    <ligand>
        <name>IMP</name>
        <dbReference type="ChEBI" id="CHEBI:58053"/>
        <note>ligand shared between dimeric partners</note>
    </ligand>
</feature>
<feature type="binding site" description="in other chain" evidence="2">
    <location>
        <position position="245"/>
    </location>
    <ligand>
        <name>IMP</name>
        <dbReference type="ChEBI" id="CHEBI:58053"/>
        <note>ligand shared between dimeric partners</note>
    </ligand>
</feature>
<feature type="binding site" evidence="2">
    <location>
        <begin position="305"/>
        <end position="311"/>
    </location>
    <ligand>
        <name>substrate</name>
    </ligand>
</feature>
<feature type="binding site" description="in other chain" evidence="2">
    <location>
        <position position="309"/>
    </location>
    <ligand>
        <name>IMP</name>
        <dbReference type="ChEBI" id="CHEBI:58053"/>
        <note>ligand shared between dimeric partners</note>
    </ligand>
</feature>
<feature type="binding site" evidence="2">
    <location>
        <position position="311"/>
    </location>
    <ligand>
        <name>GTP</name>
        <dbReference type="ChEBI" id="CHEBI:37565"/>
    </ligand>
</feature>
<feature type="binding site" evidence="2">
    <location>
        <begin position="337"/>
        <end position="339"/>
    </location>
    <ligand>
        <name>GTP</name>
        <dbReference type="ChEBI" id="CHEBI:37565"/>
    </ligand>
</feature>
<feature type="binding site" evidence="2">
    <location>
        <begin position="419"/>
        <end position="421"/>
    </location>
    <ligand>
        <name>GTP</name>
        <dbReference type="ChEBI" id="CHEBI:37565"/>
    </ligand>
</feature>
<keyword id="KW-0963">Cytoplasm</keyword>
<keyword id="KW-0342">GTP-binding</keyword>
<keyword id="KW-0436">Ligase</keyword>
<keyword id="KW-0460">Magnesium</keyword>
<keyword id="KW-0479">Metal-binding</keyword>
<keyword id="KW-0547">Nucleotide-binding</keyword>
<keyword id="KW-0658">Purine biosynthesis</keyword>